<accession>A8H254</accession>
<evidence type="ECO:0000255" key="1">
    <source>
        <dbReference type="HAMAP-Rule" id="MF_00344"/>
    </source>
</evidence>
<proteinExistence type="inferred from homology"/>
<name>GUAA_SHEPA</name>
<feature type="chain" id="PRO_1000120405" description="GMP synthase [glutamine-hydrolyzing]">
    <location>
        <begin position="1"/>
        <end position="525"/>
    </location>
</feature>
<feature type="domain" description="Glutamine amidotransferase type-1" evidence="1">
    <location>
        <begin position="8"/>
        <end position="207"/>
    </location>
</feature>
<feature type="domain" description="GMPS ATP-PPase" evidence="1">
    <location>
        <begin position="208"/>
        <end position="400"/>
    </location>
</feature>
<feature type="active site" description="Nucleophile" evidence="1">
    <location>
        <position position="85"/>
    </location>
</feature>
<feature type="active site" evidence="1">
    <location>
        <position position="181"/>
    </location>
</feature>
<feature type="active site" evidence="1">
    <location>
        <position position="183"/>
    </location>
</feature>
<feature type="binding site" evidence="1">
    <location>
        <begin position="235"/>
        <end position="241"/>
    </location>
    <ligand>
        <name>ATP</name>
        <dbReference type="ChEBI" id="CHEBI:30616"/>
    </ligand>
</feature>
<keyword id="KW-0067">ATP-binding</keyword>
<keyword id="KW-0315">Glutamine amidotransferase</keyword>
<keyword id="KW-0332">GMP biosynthesis</keyword>
<keyword id="KW-0436">Ligase</keyword>
<keyword id="KW-0547">Nucleotide-binding</keyword>
<keyword id="KW-0658">Purine biosynthesis</keyword>
<keyword id="KW-1185">Reference proteome</keyword>
<reference key="1">
    <citation type="submission" date="2007-10" db="EMBL/GenBank/DDBJ databases">
        <title>Complete sequence of Shewanella pealeana ATCC 700345.</title>
        <authorList>
            <consortium name="US DOE Joint Genome Institute"/>
            <person name="Copeland A."/>
            <person name="Lucas S."/>
            <person name="Lapidus A."/>
            <person name="Barry K."/>
            <person name="Glavina del Rio T."/>
            <person name="Dalin E."/>
            <person name="Tice H."/>
            <person name="Pitluck S."/>
            <person name="Chertkov O."/>
            <person name="Brettin T."/>
            <person name="Bruce D."/>
            <person name="Detter J.C."/>
            <person name="Han C."/>
            <person name="Schmutz J."/>
            <person name="Larimer F."/>
            <person name="Land M."/>
            <person name="Hauser L."/>
            <person name="Kyrpides N."/>
            <person name="Kim E."/>
            <person name="Zhao J.-S.Z."/>
            <person name="Manno D."/>
            <person name="Hawari J."/>
            <person name="Richardson P."/>
        </authorList>
    </citation>
    <scope>NUCLEOTIDE SEQUENCE [LARGE SCALE GENOMIC DNA]</scope>
    <source>
        <strain>ATCC 700345 / ANG-SQ1</strain>
    </source>
</reference>
<protein>
    <recommendedName>
        <fullName evidence="1">GMP synthase [glutamine-hydrolyzing]</fullName>
        <ecNumber evidence="1">6.3.5.2</ecNumber>
    </recommendedName>
    <alternativeName>
        <fullName evidence="1">GMP synthetase</fullName>
    </alternativeName>
    <alternativeName>
        <fullName evidence="1">Glutamine amidotransferase</fullName>
    </alternativeName>
</protein>
<organism>
    <name type="scientific">Shewanella pealeana (strain ATCC 700345 / ANG-SQ1)</name>
    <dbReference type="NCBI Taxonomy" id="398579"/>
    <lineage>
        <taxon>Bacteria</taxon>
        <taxon>Pseudomonadati</taxon>
        <taxon>Pseudomonadota</taxon>
        <taxon>Gammaproteobacteria</taxon>
        <taxon>Alteromonadales</taxon>
        <taxon>Shewanellaceae</taxon>
        <taxon>Shewanella</taxon>
    </lineage>
</organism>
<sequence>MSNIHEHKILILDFGSQYTQLIARRIREIGVYCELWAWDVSEEQIREFAPNGIILAGGPESVTAENSPRAPEYVFNAGVPVLGICYGMQTMSEQLGGKVIQGVGEGEFGYAQVEVQTESALFKAIEDAVSETGKPLLDVWMSHGDKVSAIPEGFVAVAKTETCPFAAMANEDKQFYGVQFHPEVTHTRQGKRMLEHFALEICGCPANWKPSSIIEDAIERLKEQIGDDEVILGLSGGVDSSVVAMLLHRAIGDKLTCVFVDNGLLRLNEAQQVMDMFGDHFGLNIVHVDAENRFLDAMAGEAEPEAKRKIIGRVFVEIFDEESKKCVNAKWLAQGTIYPDVIESAGSATGKAHCIKSHHNVGGLPDDMAMGLVEPLRELFKDEVRKIGLELGLPYDMLYRHPFPGPGLGVRVLGEVKKEYCDLLRLADAIFIEELHKADLYNKVSQAFTVFLPVRSVGVMGDGRKYDWVVSLRAVETIDFMTAHWAHLPYDFLGRVSNRIINEVDGISRVVYDISGKPPATIEWE</sequence>
<gene>
    <name evidence="1" type="primary">guaA</name>
    <name type="ordered locus">Spea_1314</name>
</gene>
<dbReference type="EC" id="6.3.5.2" evidence="1"/>
<dbReference type="EMBL" id="CP000851">
    <property type="protein sequence ID" value="ABV86641.1"/>
    <property type="molecule type" value="Genomic_DNA"/>
</dbReference>
<dbReference type="RefSeq" id="WP_012154567.1">
    <property type="nucleotide sequence ID" value="NC_009901.1"/>
</dbReference>
<dbReference type="SMR" id="A8H254"/>
<dbReference type="STRING" id="398579.Spea_1314"/>
<dbReference type="MEROPS" id="C26.A07"/>
<dbReference type="KEGG" id="spl:Spea_1314"/>
<dbReference type="eggNOG" id="COG0518">
    <property type="taxonomic scope" value="Bacteria"/>
</dbReference>
<dbReference type="eggNOG" id="COG0519">
    <property type="taxonomic scope" value="Bacteria"/>
</dbReference>
<dbReference type="HOGENOM" id="CLU_014340_0_5_6"/>
<dbReference type="OrthoDB" id="9802219at2"/>
<dbReference type="UniPathway" id="UPA00189">
    <property type="reaction ID" value="UER00296"/>
</dbReference>
<dbReference type="Proteomes" id="UP000002608">
    <property type="component" value="Chromosome"/>
</dbReference>
<dbReference type="GO" id="GO:0005829">
    <property type="term" value="C:cytosol"/>
    <property type="evidence" value="ECO:0007669"/>
    <property type="project" value="TreeGrafter"/>
</dbReference>
<dbReference type="GO" id="GO:0005524">
    <property type="term" value="F:ATP binding"/>
    <property type="evidence" value="ECO:0007669"/>
    <property type="project" value="UniProtKB-UniRule"/>
</dbReference>
<dbReference type="GO" id="GO:0003921">
    <property type="term" value="F:GMP synthase activity"/>
    <property type="evidence" value="ECO:0007669"/>
    <property type="project" value="InterPro"/>
</dbReference>
<dbReference type="CDD" id="cd01742">
    <property type="entry name" value="GATase1_GMP_Synthase"/>
    <property type="match status" value="1"/>
</dbReference>
<dbReference type="CDD" id="cd01997">
    <property type="entry name" value="GMP_synthase_C"/>
    <property type="match status" value="1"/>
</dbReference>
<dbReference type="FunFam" id="3.30.300.10:FF:000002">
    <property type="entry name" value="GMP synthase [glutamine-hydrolyzing]"/>
    <property type="match status" value="1"/>
</dbReference>
<dbReference type="FunFam" id="3.40.50.620:FF:000001">
    <property type="entry name" value="GMP synthase [glutamine-hydrolyzing]"/>
    <property type="match status" value="1"/>
</dbReference>
<dbReference type="FunFam" id="3.40.50.880:FF:000001">
    <property type="entry name" value="GMP synthase [glutamine-hydrolyzing]"/>
    <property type="match status" value="1"/>
</dbReference>
<dbReference type="Gene3D" id="3.30.300.10">
    <property type="match status" value="1"/>
</dbReference>
<dbReference type="Gene3D" id="3.40.50.880">
    <property type="match status" value="1"/>
</dbReference>
<dbReference type="Gene3D" id="3.40.50.620">
    <property type="entry name" value="HUPs"/>
    <property type="match status" value="1"/>
</dbReference>
<dbReference type="HAMAP" id="MF_00344">
    <property type="entry name" value="GMP_synthase"/>
    <property type="match status" value="1"/>
</dbReference>
<dbReference type="InterPro" id="IPR029062">
    <property type="entry name" value="Class_I_gatase-like"/>
</dbReference>
<dbReference type="InterPro" id="IPR017926">
    <property type="entry name" value="GATASE"/>
</dbReference>
<dbReference type="InterPro" id="IPR001674">
    <property type="entry name" value="GMP_synth_C"/>
</dbReference>
<dbReference type="InterPro" id="IPR004739">
    <property type="entry name" value="GMP_synth_GATase"/>
</dbReference>
<dbReference type="InterPro" id="IPR022955">
    <property type="entry name" value="GMP_synthase"/>
</dbReference>
<dbReference type="InterPro" id="IPR025777">
    <property type="entry name" value="GMPS_ATP_PPase_dom"/>
</dbReference>
<dbReference type="InterPro" id="IPR022310">
    <property type="entry name" value="NAD/GMP_synthase"/>
</dbReference>
<dbReference type="InterPro" id="IPR014729">
    <property type="entry name" value="Rossmann-like_a/b/a_fold"/>
</dbReference>
<dbReference type="NCBIfam" id="TIGR00884">
    <property type="entry name" value="guaA_Cterm"/>
    <property type="match status" value="1"/>
</dbReference>
<dbReference type="NCBIfam" id="TIGR00888">
    <property type="entry name" value="guaA_Nterm"/>
    <property type="match status" value="1"/>
</dbReference>
<dbReference type="NCBIfam" id="NF000848">
    <property type="entry name" value="PRK00074.1"/>
    <property type="match status" value="1"/>
</dbReference>
<dbReference type="PANTHER" id="PTHR11922:SF2">
    <property type="entry name" value="GMP SYNTHASE [GLUTAMINE-HYDROLYZING]"/>
    <property type="match status" value="1"/>
</dbReference>
<dbReference type="PANTHER" id="PTHR11922">
    <property type="entry name" value="GMP SYNTHASE-RELATED"/>
    <property type="match status" value="1"/>
</dbReference>
<dbReference type="Pfam" id="PF00117">
    <property type="entry name" value="GATase"/>
    <property type="match status" value="1"/>
</dbReference>
<dbReference type="Pfam" id="PF00958">
    <property type="entry name" value="GMP_synt_C"/>
    <property type="match status" value="1"/>
</dbReference>
<dbReference type="Pfam" id="PF02540">
    <property type="entry name" value="NAD_synthase"/>
    <property type="match status" value="1"/>
</dbReference>
<dbReference type="PRINTS" id="PR00097">
    <property type="entry name" value="ANTSNTHASEII"/>
</dbReference>
<dbReference type="PRINTS" id="PR00099">
    <property type="entry name" value="CPSGATASE"/>
</dbReference>
<dbReference type="PRINTS" id="PR00096">
    <property type="entry name" value="GATASE"/>
</dbReference>
<dbReference type="SUPFAM" id="SSF52402">
    <property type="entry name" value="Adenine nucleotide alpha hydrolases-like"/>
    <property type="match status" value="1"/>
</dbReference>
<dbReference type="SUPFAM" id="SSF52317">
    <property type="entry name" value="Class I glutamine amidotransferase-like"/>
    <property type="match status" value="1"/>
</dbReference>
<dbReference type="SUPFAM" id="SSF54810">
    <property type="entry name" value="GMP synthetase C-terminal dimerisation domain"/>
    <property type="match status" value="1"/>
</dbReference>
<dbReference type="PROSITE" id="PS51273">
    <property type="entry name" value="GATASE_TYPE_1"/>
    <property type="match status" value="1"/>
</dbReference>
<dbReference type="PROSITE" id="PS51553">
    <property type="entry name" value="GMPS_ATP_PPASE"/>
    <property type="match status" value="1"/>
</dbReference>
<comment type="function">
    <text evidence="1">Catalyzes the synthesis of GMP from XMP.</text>
</comment>
<comment type="catalytic activity">
    <reaction evidence="1">
        <text>XMP + L-glutamine + ATP + H2O = GMP + L-glutamate + AMP + diphosphate + 2 H(+)</text>
        <dbReference type="Rhea" id="RHEA:11680"/>
        <dbReference type="ChEBI" id="CHEBI:15377"/>
        <dbReference type="ChEBI" id="CHEBI:15378"/>
        <dbReference type="ChEBI" id="CHEBI:29985"/>
        <dbReference type="ChEBI" id="CHEBI:30616"/>
        <dbReference type="ChEBI" id="CHEBI:33019"/>
        <dbReference type="ChEBI" id="CHEBI:57464"/>
        <dbReference type="ChEBI" id="CHEBI:58115"/>
        <dbReference type="ChEBI" id="CHEBI:58359"/>
        <dbReference type="ChEBI" id="CHEBI:456215"/>
        <dbReference type="EC" id="6.3.5.2"/>
    </reaction>
</comment>
<comment type="pathway">
    <text evidence="1">Purine metabolism; GMP biosynthesis; GMP from XMP (L-Gln route): step 1/1.</text>
</comment>
<comment type="subunit">
    <text evidence="1">Homodimer.</text>
</comment>